<organism>
    <name type="scientific">Bos taurus</name>
    <name type="common">Bovine</name>
    <dbReference type="NCBI Taxonomy" id="9913"/>
    <lineage>
        <taxon>Eukaryota</taxon>
        <taxon>Metazoa</taxon>
        <taxon>Chordata</taxon>
        <taxon>Craniata</taxon>
        <taxon>Vertebrata</taxon>
        <taxon>Euteleostomi</taxon>
        <taxon>Mammalia</taxon>
        <taxon>Eutheria</taxon>
        <taxon>Laurasiatheria</taxon>
        <taxon>Artiodactyla</taxon>
        <taxon>Ruminantia</taxon>
        <taxon>Pecora</taxon>
        <taxon>Bovidae</taxon>
        <taxon>Bovinae</taxon>
        <taxon>Bos</taxon>
    </lineage>
</organism>
<proteinExistence type="evidence at transcript level"/>
<accession>Q17QU7</accession>
<dbReference type="EC" id="1.1.-.-" evidence="5"/>
<dbReference type="EMBL" id="BC118170">
    <property type="protein sequence ID" value="AAI18171.1"/>
    <property type="molecule type" value="mRNA"/>
</dbReference>
<dbReference type="RefSeq" id="NP_001069155.1">
    <property type="nucleotide sequence ID" value="NM_001075687.1"/>
</dbReference>
<dbReference type="SMR" id="Q17QU7"/>
<dbReference type="FunCoup" id="Q17QU7">
    <property type="interactions" value="311"/>
</dbReference>
<dbReference type="STRING" id="9913.ENSBTAP00000017950"/>
<dbReference type="PaxDb" id="9913-ENSBTAP00000017950"/>
<dbReference type="Ensembl" id="ENSBTAT00000017950.5">
    <property type="protein sequence ID" value="ENSBTAP00000017950.3"/>
    <property type="gene ID" value="ENSBTAG00000013501.5"/>
</dbReference>
<dbReference type="GeneID" id="514903"/>
<dbReference type="KEGG" id="bta:514903"/>
<dbReference type="CTD" id="147015"/>
<dbReference type="VEuPathDB" id="HostDB:ENSBTAG00000013501"/>
<dbReference type="VGNC" id="VGNC:28042">
    <property type="gene designation" value="DHRS13"/>
</dbReference>
<dbReference type="eggNOG" id="KOG1208">
    <property type="taxonomic scope" value="Eukaryota"/>
</dbReference>
<dbReference type="GeneTree" id="ENSGT00940000155599"/>
<dbReference type="HOGENOM" id="CLU_010194_44_5_1"/>
<dbReference type="InParanoid" id="Q17QU7"/>
<dbReference type="OMA" id="NEVIFMM"/>
<dbReference type="OrthoDB" id="191139at2759"/>
<dbReference type="TreeFam" id="TF105429"/>
<dbReference type="Proteomes" id="UP000009136">
    <property type="component" value="Chromosome 19"/>
</dbReference>
<dbReference type="Bgee" id="ENSBTAG00000013501">
    <property type="expression patterns" value="Expressed in retina and 97 other cell types or tissues"/>
</dbReference>
<dbReference type="GO" id="GO:0005576">
    <property type="term" value="C:extracellular region"/>
    <property type="evidence" value="ECO:0007669"/>
    <property type="project" value="UniProtKB-SubCell"/>
</dbReference>
<dbReference type="GO" id="GO:0016491">
    <property type="term" value="F:oxidoreductase activity"/>
    <property type="evidence" value="ECO:0007669"/>
    <property type="project" value="UniProtKB-KW"/>
</dbReference>
<dbReference type="CDD" id="cd05327">
    <property type="entry name" value="retinol-DH_like_SDR_c_like"/>
    <property type="match status" value="1"/>
</dbReference>
<dbReference type="FunFam" id="3.40.50.720:FF:000364">
    <property type="entry name" value="Dehydrogenase/reductase SDR family member 13"/>
    <property type="match status" value="1"/>
</dbReference>
<dbReference type="Gene3D" id="3.40.50.720">
    <property type="entry name" value="NAD(P)-binding Rossmann-like Domain"/>
    <property type="match status" value="1"/>
</dbReference>
<dbReference type="InterPro" id="IPR036291">
    <property type="entry name" value="NAD(P)-bd_dom_sf"/>
</dbReference>
<dbReference type="InterPro" id="IPR002347">
    <property type="entry name" value="SDR_fam"/>
</dbReference>
<dbReference type="PANTHER" id="PTHR43157:SF44">
    <property type="entry name" value="DEHYDROGENASE_REDUCTASE SDR FAMILY MEMBER 13"/>
    <property type="match status" value="1"/>
</dbReference>
<dbReference type="PANTHER" id="PTHR43157">
    <property type="entry name" value="PHOSPHATIDYLINOSITOL-GLYCAN BIOSYNTHESIS CLASS F PROTEIN-RELATED"/>
    <property type="match status" value="1"/>
</dbReference>
<dbReference type="Pfam" id="PF00106">
    <property type="entry name" value="adh_short"/>
    <property type="match status" value="1"/>
</dbReference>
<dbReference type="PRINTS" id="PR00081">
    <property type="entry name" value="GDHRDH"/>
</dbReference>
<dbReference type="SUPFAM" id="SSF51735">
    <property type="entry name" value="NAD(P)-binding Rossmann-fold domains"/>
    <property type="match status" value="1"/>
</dbReference>
<keyword id="KW-0520">NAD</keyword>
<keyword id="KW-0521">NADP</keyword>
<keyword id="KW-0560">Oxidoreductase</keyword>
<keyword id="KW-1185">Reference proteome</keyword>
<keyword id="KW-0964">Secreted</keyword>
<keyword id="KW-0732">Signal</keyword>
<feature type="signal peptide" evidence="3">
    <location>
        <begin position="1"/>
        <end position="25"/>
    </location>
</feature>
<feature type="chain" id="PRO_0000311919" description="Dehydrogenase/reductase SDR family member 13">
    <location>
        <begin position="26"/>
        <end position="377"/>
    </location>
</feature>
<feature type="region of interest" description="Disordered" evidence="4">
    <location>
        <begin position="310"/>
        <end position="363"/>
    </location>
</feature>
<feature type="compositionally biased region" description="Acidic residues" evidence="4">
    <location>
        <begin position="317"/>
        <end position="327"/>
    </location>
</feature>
<feature type="compositionally biased region" description="Low complexity" evidence="4">
    <location>
        <begin position="328"/>
        <end position="337"/>
    </location>
</feature>
<feature type="compositionally biased region" description="Polar residues" evidence="4">
    <location>
        <begin position="352"/>
        <end position="363"/>
    </location>
</feature>
<feature type="active site" description="Proton acceptor" evidence="2">
    <location>
        <position position="197"/>
    </location>
</feature>
<feature type="binding site" evidence="2">
    <location>
        <position position="46"/>
    </location>
    <ligand>
        <name>NAD(+)</name>
        <dbReference type="ChEBI" id="CHEBI:57540"/>
    </ligand>
</feature>
<feature type="binding site" evidence="2">
    <location>
        <position position="48"/>
    </location>
    <ligand>
        <name>NAD(+)</name>
        <dbReference type="ChEBI" id="CHEBI:57540"/>
    </ligand>
</feature>
<feature type="binding site" evidence="2">
    <location>
        <position position="170"/>
    </location>
    <ligand>
        <name>substrate</name>
    </ligand>
</feature>
<feature type="binding site" evidence="2">
    <location>
        <position position="197"/>
    </location>
    <ligand>
        <name>NAD(+)</name>
        <dbReference type="ChEBI" id="CHEBI:57540"/>
    </ligand>
</feature>
<feature type="binding site" evidence="2">
    <location>
        <position position="201"/>
    </location>
    <ligand>
        <name>NAD(+)</name>
        <dbReference type="ChEBI" id="CHEBI:57540"/>
    </ligand>
</feature>
<feature type="binding site" evidence="2">
    <location>
        <position position="232"/>
    </location>
    <ligand>
        <name>NAD(+)</name>
        <dbReference type="ChEBI" id="CHEBI:57540"/>
    </ligand>
</feature>
<name>DHR13_BOVIN</name>
<protein>
    <recommendedName>
        <fullName>Dehydrogenase/reductase SDR family member 13</fullName>
        <ecNumber evidence="5">1.1.-.-</ecNumber>
    </recommendedName>
    <alternativeName>
        <fullName evidence="1">Short chain dehydrogenase/reductase family 7C member 5</fullName>
        <shortName evidence="1">Protein SDR7C5</shortName>
    </alternativeName>
</protein>
<evidence type="ECO:0000250" key="1">
    <source>
        <dbReference type="UniProtKB" id="Q6UX07"/>
    </source>
</evidence>
<evidence type="ECO:0000250" key="2">
    <source>
        <dbReference type="UniProtKB" id="Q99714"/>
    </source>
</evidence>
<evidence type="ECO:0000255" key="3"/>
<evidence type="ECO:0000256" key="4">
    <source>
        <dbReference type="SAM" id="MobiDB-lite"/>
    </source>
</evidence>
<evidence type="ECO:0000305" key="5"/>
<reference key="1">
    <citation type="submission" date="2006-06" db="EMBL/GenBank/DDBJ databases">
        <authorList>
            <consortium name="NIH - Mammalian Gene Collection (MGC) project"/>
        </authorList>
    </citation>
    <scope>NUCLEOTIDE SEQUENCE [LARGE SCALE MRNA]</scope>
    <source>
        <strain>Hereford</strain>
        <tissue>Thalamus</tissue>
    </source>
</reference>
<comment type="function">
    <text evidence="5">Putative oxidoreductase.</text>
</comment>
<comment type="subcellular location">
    <subcellularLocation>
        <location evidence="5">Secreted</location>
    </subcellularLocation>
</comment>
<comment type="similarity">
    <text evidence="5">Belongs to the short-chain dehydrogenases/reductases (SDR) family.</text>
</comment>
<gene>
    <name type="primary">DHRS13</name>
    <name evidence="1" type="synonym">SDR7C5</name>
</gene>
<sequence>MEALLLGVGLLLGAYVLVYYNLVKAPPCRGLASLRGRTAVVTGANSGIGKMTALELARRGARVVLACRSRERGEAAAFDLRQESGNNEVIFMALDLASLASVRAFATAFLSSEPRLDILIHNAGISSCGRTREPFNLLLRVNHIGPFLLTHLLLPRLKTSAPSRVVVVSSAAHRRGRLDFTRLDHPVVGWQQELRAYANSKLANVLFARELATQLEGTGVTCYAAHPGPVNSELFLRHVPGWLRPLLRPLAWLVLRAPRGGAQTPLYCALQEGIEPLSGRYFANCHVEEVPPAARDDRAAHRLWEASRKLAGLGPGEDAESDEDSQPEDPGTPSSPSSPHPEEPTVSELYPSPQSSTDRSTVTCRIPVKAELEPQAC</sequence>